<gene>
    <name type="primary">U13</name>
    <name type="synonym">EFRF1</name>
</gene>
<accession>Q69548</accession>
<accession>Q69036</accession>
<feature type="chain" id="PRO_0000342571" description="Uncharacterized protein U13">
    <location>
        <begin position="1"/>
        <end position="106"/>
    </location>
</feature>
<evidence type="ECO:0000305" key="1"/>
<proteinExistence type="predicted"/>
<organismHost>
    <name type="scientific">Homo sapiens</name>
    <name type="common">Human</name>
    <dbReference type="NCBI Taxonomy" id="9606"/>
</organismHost>
<sequence length="106" mass="12003">MAHAKKRVRRKLLTSTDDPILSNTFTMRPTSKIADAEIISREHDYIASKTQTDSKKISPLSVILDKTVLFEFYGIGDNNEKAIVYPIDPDFLLCDSEHNCTLSPFL</sequence>
<comment type="sequence caution" evidence="1">
    <conflict type="erroneous initiation">
        <sequence resource="EMBL-CDS" id="AAA16718"/>
    </conflict>
    <text>Extended N-terminus.</text>
</comment>
<dbReference type="EMBL" id="L25528">
    <property type="protein sequence ID" value="AAA16718.1"/>
    <property type="status" value="ALT_INIT"/>
    <property type="molecule type" value="Genomic_DNA"/>
</dbReference>
<dbReference type="EMBL" id="X83413">
    <property type="protein sequence ID" value="CAA58392.1"/>
    <property type="molecule type" value="Genomic_DNA"/>
</dbReference>
<dbReference type="PIR" id="T09305">
    <property type="entry name" value="T09305"/>
</dbReference>
<dbReference type="RefSeq" id="NP_042905.1">
    <property type="nucleotide sequence ID" value="NC_001664.2"/>
</dbReference>
<dbReference type="DNASU" id="1487895"/>
<dbReference type="GeneID" id="1487895"/>
<dbReference type="KEGG" id="vg:1487895"/>
<dbReference type="Proteomes" id="UP000009295">
    <property type="component" value="Segment"/>
</dbReference>
<reference key="1">
    <citation type="journal article" date="1994" name="J. Virol.">
        <title>Nucleotide sequence analysis of a 38.5-kilobase-pair region of the genome of human herpesvirus 6 encoding human cytomegalovirus immediate-early gene homologs and transactivating functions.</title>
        <authorList>
            <person name="Nicholas J."/>
            <person name="Martin M.E.D."/>
        </authorList>
    </citation>
    <scope>NUCLEOTIDE SEQUENCE [GENOMIC DNA]</scope>
</reference>
<reference key="2">
    <citation type="journal article" date="1995" name="Virology">
        <title>The DNA sequence of human herpesvirus-6: structure, coding content, and genome evolution.</title>
        <authorList>
            <person name="Gompels U.A."/>
            <person name="Nicholas J."/>
            <person name="Lawrence G.L."/>
            <person name="Jones M."/>
            <person name="Thomson B.J."/>
            <person name="Martin M.E.D."/>
            <person name="Efstathiou S."/>
            <person name="Craxton M.A."/>
            <person name="Macaulay H.A."/>
        </authorList>
    </citation>
    <scope>NUCLEOTIDE SEQUENCE [LARGE SCALE GENOMIC DNA]</scope>
</reference>
<name>U13_HHV6U</name>
<organism>
    <name type="scientific">Human herpesvirus 6A (strain Uganda-1102)</name>
    <name type="common">HHV-6 variant A</name>
    <name type="synonym">Human B lymphotropic virus</name>
    <dbReference type="NCBI Taxonomy" id="10370"/>
    <lineage>
        <taxon>Viruses</taxon>
        <taxon>Duplodnaviria</taxon>
        <taxon>Heunggongvirae</taxon>
        <taxon>Peploviricota</taxon>
        <taxon>Herviviricetes</taxon>
        <taxon>Herpesvirales</taxon>
        <taxon>Orthoherpesviridae</taxon>
        <taxon>Betaherpesvirinae</taxon>
        <taxon>Roseolovirus</taxon>
        <taxon>Roseolovirus humanbeta6a</taxon>
        <taxon>Human betaherpesvirus 6A</taxon>
    </lineage>
</organism>
<protein>
    <recommendedName>
        <fullName>Uncharacterized protein U13</fullName>
    </recommendedName>
</protein>
<keyword id="KW-1185">Reference proteome</keyword>